<name>TMCA_THEKO</name>
<keyword id="KW-0012">Acyltransferase</keyword>
<keyword id="KW-0067">ATP-binding</keyword>
<keyword id="KW-0963">Cytoplasm</keyword>
<keyword id="KW-0547">Nucleotide-binding</keyword>
<keyword id="KW-1185">Reference proteome</keyword>
<keyword id="KW-0694">RNA-binding</keyword>
<keyword id="KW-0698">rRNA processing</keyword>
<keyword id="KW-0699">rRNA-binding</keyword>
<keyword id="KW-0808">Transferase</keyword>
<keyword id="KW-0819">tRNA processing</keyword>
<keyword id="KW-0820">tRNA-binding</keyword>
<organism>
    <name type="scientific">Thermococcus kodakarensis (strain ATCC BAA-918 / JCM 12380 / KOD1)</name>
    <name type="common">Pyrococcus kodakaraensis (strain KOD1)</name>
    <dbReference type="NCBI Taxonomy" id="69014"/>
    <lineage>
        <taxon>Archaea</taxon>
        <taxon>Methanobacteriati</taxon>
        <taxon>Methanobacteriota</taxon>
        <taxon>Thermococci</taxon>
        <taxon>Thermococcales</taxon>
        <taxon>Thermococcaceae</taxon>
        <taxon>Thermococcus</taxon>
    </lineage>
</organism>
<proteinExistence type="evidence at protein level"/>
<protein>
    <recommendedName>
        <fullName evidence="1">tRNA(Met) cytidine acetyltransferase TmcA</fullName>
        <ecNumber evidence="1 3">2.3.1.193</ecNumber>
    </recommendedName>
    <alternativeName>
        <fullName evidence="5">TkNAT10</fullName>
    </alternativeName>
</protein>
<reference evidence="8" key="1">
    <citation type="journal article" date="2005" name="Genome Res.">
        <title>Complete genome sequence of the hyperthermophilic archaeon Thermococcus kodakaraensis KOD1 and comparison with Pyrococcus genomes.</title>
        <authorList>
            <person name="Fukui T."/>
            <person name="Atomi H."/>
            <person name="Kanai T."/>
            <person name="Matsumi R."/>
            <person name="Fujiwara S."/>
            <person name="Imanaka T."/>
        </authorList>
    </citation>
    <scope>NUCLEOTIDE SEQUENCE [LARGE SCALE GENOMIC DNA]</scope>
    <source>
        <strain>ATCC BAA-918 / JCM 12380 / KOD1</strain>
    </source>
</reference>
<reference key="2">
    <citation type="journal article" date="2019" name="Nucleic Acids Res.">
        <title>Random mutagenesis of a hyperthermophilic archaeon identified tRNA modifications associated with cellular hyperthermotolerance.</title>
        <authorList>
            <person name="Orita I."/>
            <person name="Futatsuishi R."/>
            <person name="Adachi K."/>
            <person name="Ohira T."/>
            <person name="Kaneko A."/>
            <person name="Minowa K."/>
            <person name="Suzuki M."/>
            <person name="Tamura T."/>
            <person name="Nakamura S."/>
            <person name="Imanaka T."/>
            <person name="Suzuki T."/>
            <person name="Fukui T."/>
        </authorList>
    </citation>
    <scope>FUNCTION</scope>
    <scope>DISRUPTION PHENOTYPE</scope>
    <source>
        <strain>ATCC BAA-918 / JCM 12380 / KOD1</strain>
    </source>
</reference>
<reference key="3">
    <citation type="journal article" date="2020" name="Nature">
        <title>Dynamic RNA acetylation revealed by quantitative cross-evolutionary mapping.</title>
        <authorList>
            <person name="Sas-Chen A."/>
            <person name="Thomas J.M."/>
            <person name="Matzov D."/>
            <person name="Taoka M."/>
            <person name="Nance K.D."/>
            <person name="Nir R."/>
            <person name="Bryson K.M."/>
            <person name="Shachar R."/>
            <person name="Liman G.L.S."/>
            <person name="Burkhart B.W."/>
            <person name="Gamage S.T."/>
            <person name="Nobe Y."/>
            <person name="Briney C.A."/>
            <person name="Levy M.J."/>
            <person name="Fuchs R.T."/>
            <person name="Robb G.B."/>
            <person name="Hartmann J."/>
            <person name="Sharma S."/>
            <person name="Lin Q."/>
            <person name="Florens L."/>
            <person name="Washburn M.P."/>
            <person name="Isobe T."/>
            <person name="Santangelo T.J."/>
            <person name="Shalev-Benami M."/>
            <person name="Meier J.L."/>
            <person name="Schwartz S."/>
        </authorList>
    </citation>
    <scope>FUNCTION</scope>
    <scope>CATALYTIC ACTIVITY</scope>
    <scope>INDUCTION</scope>
    <scope>DISRUPTION PHENOTYPE</scope>
    <source>
        <strain>ATCC BAA-918 / TS559</strain>
    </source>
</reference>
<dbReference type="EC" id="2.3.1.193" evidence="1 3"/>
<dbReference type="EMBL" id="AP006878">
    <property type="protein sequence ID" value="BAD84943.1"/>
    <property type="molecule type" value="Genomic_DNA"/>
</dbReference>
<dbReference type="RefSeq" id="WP_011249705.1">
    <property type="nucleotide sequence ID" value="NC_006624.1"/>
</dbReference>
<dbReference type="SMR" id="Q5JHC6"/>
<dbReference type="STRING" id="69014.TK0754"/>
<dbReference type="EnsemblBacteria" id="BAD84943">
    <property type="protein sequence ID" value="BAD84943"/>
    <property type="gene ID" value="TK0754"/>
</dbReference>
<dbReference type="GeneID" id="78447268"/>
<dbReference type="KEGG" id="tko:TK0754"/>
<dbReference type="PATRIC" id="fig|69014.16.peg.733"/>
<dbReference type="eggNOG" id="arCOG01951">
    <property type="taxonomic scope" value="Archaea"/>
</dbReference>
<dbReference type="HOGENOM" id="CLU_004652_1_0_2"/>
<dbReference type="InParanoid" id="Q5JHC6"/>
<dbReference type="OrthoDB" id="312894at2157"/>
<dbReference type="PhylomeDB" id="Q5JHC6"/>
<dbReference type="Proteomes" id="UP000000536">
    <property type="component" value="Chromosome"/>
</dbReference>
<dbReference type="GO" id="GO:0005737">
    <property type="term" value="C:cytoplasm"/>
    <property type="evidence" value="ECO:0007669"/>
    <property type="project" value="UniProtKB-SubCell"/>
</dbReference>
<dbReference type="GO" id="GO:1990883">
    <property type="term" value="F:18S rRNA cytidine N-acetyltransferase activity"/>
    <property type="evidence" value="ECO:0000315"/>
    <property type="project" value="UniProtKB"/>
</dbReference>
<dbReference type="GO" id="GO:0005524">
    <property type="term" value="F:ATP binding"/>
    <property type="evidence" value="ECO:0007669"/>
    <property type="project" value="UniProtKB-UniRule"/>
</dbReference>
<dbReference type="GO" id="GO:0106162">
    <property type="term" value="F:mRNA N-acetyltransferase activity"/>
    <property type="evidence" value="ECO:0000315"/>
    <property type="project" value="UniProtKB"/>
</dbReference>
<dbReference type="GO" id="GO:0019843">
    <property type="term" value="F:rRNA binding"/>
    <property type="evidence" value="ECO:0007669"/>
    <property type="project" value="UniProtKB-KW"/>
</dbReference>
<dbReference type="GO" id="GO:0000049">
    <property type="term" value="F:tRNA binding"/>
    <property type="evidence" value="ECO:0000318"/>
    <property type="project" value="GO_Central"/>
</dbReference>
<dbReference type="GO" id="GO:0051392">
    <property type="term" value="F:tRNA N4-acetyltransferase activity"/>
    <property type="evidence" value="ECO:0000315"/>
    <property type="project" value="UniProtKB"/>
</dbReference>
<dbReference type="GO" id="GO:1990882">
    <property type="term" value="P:rRNA acetylation"/>
    <property type="evidence" value="ECO:0000315"/>
    <property type="project" value="UniProtKB"/>
</dbReference>
<dbReference type="GO" id="GO:1904812">
    <property type="term" value="P:rRNA acetylation involved in maturation of SSU-rRNA"/>
    <property type="evidence" value="ECO:0000318"/>
    <property type="project" value="GO_Central"/>
</dbReference>
<dbReference type="GO" id="GO:0051391">
    <property type="term" value="P:tRNA acetylation"/>
    <property type="evidence" value="ECO:0000315"/>
    <property type="project" value="UniProtKB"/>
</dbReference>
<dbReference type="GO" id="GO:0002101">
    <property type="term" value="P:tRNA wobble cytosine modification"/>
    <property type="evidence" value="ECO:0000318"/>
    <property type="project" value="GO_Central"/>
</dbReference>
<dbReference type="CDD" id="cd04301">
    <property type="entry name" value="NAT_SF"/>
    <property type="match status" value="1"/>
</dbReference>
<dbReference type="FunFam" id="3.40.50.300:FF:002218">
    <property type="entry name" value="tRNA(Met) cytidine acetyltransferase TmcA"/>
    <property type="match status" value="1"/>
</dbReference>
<dbReference type="FunFam" id="3.40.630.30:FF:000140">
    <property type="entry name" value="tRNA(Met) cytidine acetyltransferase TmcA"/>
    <property type="match status" value="1"/>
</dbReference>
<dbReference type="Gene3D" id="3.40.50.11040">
    <property type="match status" value="1"/>
</dbReference>
<dbReference type="Gene3D" id="3.40.630.30">
    <property type="match status" value="1"/>
</dbReference>
<dbReference type="Gene3D" id="3.40.50.300">
    <property type="entry name" value="P-loop containing nucleotide triphosphate hydrolases"/>
    <property type="match status" value="1"/>
</dbReference>
<dbReference type="HAMAP" id="MF_01886">
    <property type="entry name" value="tRNA_acetyltr_TmcA"/>
    <property type="match status" value="1"/>
</dbReference>
<dbReference type="InterPro" id="IPR016181">
    <property type="entry name" value="Acyl_CoA_acyltransferase"/>
</dbReference>
<dbReference type="InterPro" id="IPR000182">
    <property type="entry name" value="GNAT_dom"/>
</dbReference>
<dbReference type="InterPro" id="IPR007807">
    <property type="entry name" value="NAT10/TcmA_helicase"/>
</dbReference>
<dbReference type="InterPro" id="IPR027417">
    <property type="entry name" value="P-loop_NTPase"/>
</dbReference>
<dbReference type="InterPro" id="IPR032672">
    <property type="entry name" value="TmcA/NAT10/Kre33"/>
</dbReference>
<dbReference type="InterPro" id="IPR013562">
    <property type="entry name" value="TmcA_N"/>
</dbReference>
<dbReference type="InterPro" id="IPR024914">
    <property type="entry name" value="tRNA_acetyltr_TmcA"/>
</dbReference>
<dbReference type="PANTHER" id="PTHR10925">
    <property type="entry name" value="N-ACETYLTRANSFERASE 10"/>
    <property type="match status" value="1"/>
</dbReference>
<dbReference type="PANTHER" id="PTHR10925:SF5">
    <property type="entry name" value="RNA CYTIDINE ACETYLTRANSFERASE"/>
    <property type="match status" value="1"/>
</dbReference>
<dbReference type="Pfam" id="PF13718">
    <property type="entry name" value="GNAT_acetyltr_2"/>
    <property type="match status" value="2"/>
</dbReference>
<dbReference type="Pfam" id="PF05127">
    <property type="entry name" value="NAT10_TcmA_helicase"/>
    <property type="match status" value="1"/>
</dbReference>
<dbReference type="Pfam" id="PF08351">
    <property type="entry name" value="TmcA_N"/>
    <property type="match status" value="1"/>
</dbReference>
<dbReference type="SUPFAM" id="SSF55729">
    <property type="entry name" value="Acyl-CoA N-acyltransferases (Nat)"/>
    <property type="match status" value="1"/>
</dbReference>
<dbReference type="SUPFAM" id="SSF52540">
    <property type="entry name" value="P-loop containing nucleoside triphosphate hydrolases"/>
    <property type="match status" value="1"/>
</dbReference>
<dbReference type="PROSITE" id="PS51186">
    <property type="entry name" value="GNAT"/>
    <property type="match status" value="1"/>
</dbReference>
<gene>
    <name evidence="1 4" type="primary">tmcA</name>
    <name evidence="5" type="synonym">Nat10</name>
    <name evidence="8" type="ordered locus">TK0754</name>
</gene>
<accession>Q5JHC6</accession>
<feature type="chain" id="PRO_0000461795" description="tRNA(Met) cytidine acetyltransferase TmcA">
    <location>
        <begin position="1"/>
        <end position="811"/>
    </location>
</feature>
<feature type="domain" description="N-acetyltransferase" evidence="1">
    <location>
        <begin position="474"/>
        <end position="663"/>
    </location>
</feature>
<feature type="binding site" evidence="1">
    <location>
        <position position="267"/>
    </location>
    <ligand>
        <name>ATP</name>
        <dbReference type="ChEBI" id="CHEBI:30616"/>
    </ligand>
</feature>
<feature type="binding site" evidence="1">
    <location>
        <position position="440"/>
    </location>
    <ligand>
        <name>ATP</name>
        <dbReference type="ChEBI" id="CHEBI:30616"/>
    </ligand>
</feature>
<feature type="binding site" evidence="1">
    <location>
        <begin position="590"/>
        <end position="592"/>
    </location>
    <ligand>
        <name>acetyl-CoA</name>
        <dbReference type="ChEBI" id="CHEBI:57288"/>
    </ligand>
</feature>
<feature type="binding site" evidence="1">
    <location>
        <position position="630"/>
    </location>
    <ligand>
        <name>acetyl-CoA</name>
        <dbReference type="ChEBI" id="CHEBI:57288"/>
    </ligand>
</feature>
<feature type="binding site" evidence="1">
    <location>
        <position position="637"/>
    </location>
    <ligand>
        <name>acetyl-CoA</name>
        <dbReference type="ChEBI" id="CHEBI:57288"/>
    </ligand>
</feature>
<sequence length="811" mass="93535">MTVKVRFDKEVREYAKGEKVKDSVLKITETALAQALEKFHRRMIVIEGDTLKKAELAGILAGASARVLSDIVGELIEKRLRDESEDKIEVLYATDALGEETFGRKRYEAFRKHFDVLAGSEVNVTAVTFKHTREILGRTYDLLILDMSYDYSPNDLGRIIETVRGGGLIFILAHPFEKWKDMWTGFHKSLVTPPYTIEDVKKRFNRRLIRKFTQHDGIYIITESGKAKKKPKKSKSQAKIRARKGVEIPEETLFPKELYEMALTRGQVEVLKAFEELVDKEGMLVLTADRGRGKSVSVGIAAIGLAVALKKRTRIVVTAPELENVQSLFRFAKRALEKLGFKPYVVEEKGLIKELYARKIGLRYYPPAEGYKKNADLYILDEAAGIHVPILHKYLNKPRVVYSSTIHGYEGAGRGFSVKFLKKAREKRSFKELHMEEPIRYAYGDPIEKWLFDVLLLDAEPVELTEEDYELIKRKEVYLEEPDLDDWFENDREDLRHFVGIYILAHYRNRPSDVALLADAPHHEARVLRLKNGKIVTAVQIAKEGGIPKNVIDKMAKGYKPRGNIIPDMMVKHHYLKEFARLKGYRIVRIATHPDAMDMGLGSKALELLEKEAREKGLDWIGSGFGASEELVRFWVRNGFAVVHLSPARNPVSGEFTAIVLKPISKKAKELIKKANDEFRIRFTEWLGDTHRELEPEIARWLFETPFGEAVDYPIHLTEIQKKRLDAFTGKVLTYDTVVDAVKPIVKLYFLDGWMKPYLDERQIKLLIYRVLQAHSWEETAKLIDRTEMFTMIEVRDIIRGLWYYYKRLLT</sequence>
<comment type="function">
    <text evidence="1 3 6">Catalyzes the formation of N(4)-acetylcytidine (ac(4)C) at the wobble position of tRNA(Met), by using acetyl-CoA as an acetyl donor and ATP (or GTP) (PubMed:30605516, PubMed:32555463).</text>
</comment>
<comment type="function">
    <text evidence="3">Catalyzes the formation of 404 N(4)-acetylcytidine (ac(4)C) sites in RNA, almost always on the middle C of a CCG motif. There 173 ac(4)C sites in rRNA, 35 in non-coding (nc)RNA, 119 in mRNA and 77 in tRNA. More acetylation is observed at 85 and 95 than at 65 or 75 degrees Celsius.</text>
</comment>
<comment type="catalytic activity">
    <reaction evidence="1 3">
        <text>cytidine(34) in elongator tRNA(Met) + acetyl-CoA + ATP + H2O = N(4)-acetylcytidine(34) in elongator tRNA(Met) + ADP + phosphate + CoA + H(+)</text>
        <dbReference type="Rhea" id="RHEA:43788"/>
        <dbReference type="Rhea" id="RHEA-COMP:10693"/>
        <dbReference type="Rhea" id="RHEA-COMP:10694"/>
        <dbReference type="ChEBI" id="CHEBI:15377"/>
        <dbReference type="ChEBI" id="CHEBI:15378"/>
        <dbReference type="ChEBI" id="CHEBI:30616"/>
        <dbReference type="ChEBI" id="CHEBI:43474"/>
        <dbReference type="ChEBI" id="CHEBI:57287"/>
        <dbReference type="ChEBI" id="CHEBI:57288"/>
        <dbReference type="ChEBI" id="CHEBI:74900"/>
        <dbReference type="ChEBI" id="CHEBI:82748"/>
        <dbReference type="ChEBI" id="CHEBI:456216"/>
        <dbReference type="EC" id="2.3.1.193"/>
    </reaction>
</comment>
<comment type="catalytic activity">
    <reaction evidence="7">
        <text>a cytidine in RNA + acetyl-CoA + ATP + H2O = an N(4)-acetylcytidine in RNA + ADP + phosphate + CoA + H(+)</text>
        <dbReference type="Rhea" id="RHEA:82211"/>
        <dbReference type="Rhea" id="RHEA-COMP:15704"/>
        <dbReference type="Rhea" id="RHEA-COMP:19834"/>
        <dbReference type="ChEBI" id="CHEBI:15377"/>
        <dbReference type="ChEBI" id="CHEBI:15378"/>
        <dbReference type="ChEBI" id="CHEBI:30616"/>
        <dbReference type="ChEBI" id="CHEBI:43474"/>
        <dbReference type="ChEBI" id="CHEBI:57287"/>
        <dbReference type="ChEBI" id="CHEBI:57288"/>
        <dbReference type="ChEBI" id="CHEBI:74900"/>
        <dbReference type="ChEBI" id="CHEBI:82748"/>
        <dbReference type="ChEBI" id="CHEBI:456216"/>
    </reaction>
</comment>
<comment type="catalytic activity">
    <reaction evidence="3">
        <text>a cytidine in tRNA + acetyl-CoA + ATP + H2O = an N(4)-acetylcytidine in tRNA + ADP + phosphate + CoA + H(+)</text>
        <dbReference type="Rhea" id="RHEA:53876"/>
        <dbReference type="Rhea" id="RHEA-COMP:13670"/>
        <dbReference type="Rhea" id="RHEA-COMP:13671"/>
        <dbReference type="ChEBI" id="CHEBI:15377"/>
        <dbReference type="ChEBI" id="CHEBI:15378"/>
        <dbReference type="ChEBI" id="CHEBI:30616"/>
        <dbReference type="ChEBI" id="CHEBI:43474"/>
        <dbReference type="ChEBI" id="CHEBI:57287"/>
        <dbReference type="ChEBI" id="CHEBI:57288"/>
        <dbReference type="ChEBI" id="CHEBI:74900"/>
        <dbReference type="ChEBI" id="CHEBI:82748"/>
        <dbReference type="ChEBI" id="CHEBI:456216"/>
    </reaction>
</comment>
<comment type="catalytic activity">
    <reaction evidence="3">
        <text>a cytidine in mRNA + acetyl-CoA + ATP + H2O = an N(4)-acetylcytidine in mRNA + ADP + phosphate + CoA + H(+)</text>
        <dbReference type="Rhea" id="RHEA:58480"/>
        <dbReference type="Rhea" id="RHEA-COMP:15145"/>
        <dbReference type="Rhea" id="RHEA-COMP:15146"/>
        <dbReference type="ChEBI" id="CHEBI:15377"/>
        <dbReference type="ChEBI" id="CHEBI:15378"/>
        <dbReference type="ChEBI" id="CHEBI:30616"/>
        <dbReference type="ChEBI" id="CHEBI:43474"/>
        <dbReference type="ChEBI" id="CHEBI:57287"/>
        <dbReference type="ChEBI" id="CHEBI:57288"/>
        <dbReference type="ChEBI" id="CHEBI:74900"/>
        <dbReference type="ChEBI" id="CHEBI:82748"/>
        <dbReference type="ChEBI" id="CHEBI:456216"/>
    </reaction>
</comment>
<comment type="subcellular location">
    <subcellularLocation>
        <location evidence="1">Cytoplasm</location>
    </subcellularLocation>
</comment>
<comment type="induction">
    <text evidence="3">More highly expressed at 85 than 65 degrees Celsius (at protein level).</text>
</comment>
<comment type="disruption phenotype">
    <text evidence="2 3">Grows at 85 but not 93 degrees Celsius, loss of N(4)-acetylcytidine (ac(4)C) residues in tRNA, no change in thermostabiity of bulk tRNA (PubMed:30605516). Complete loss of all ac(4)C in rRNA, tRNA, ncRNA and mRNA, decreased growth rate starting from 75 degrees Celsius, very slow to no growth at 95 degrees Celsius (PubMed:32555463).</text>
</comment>
<comment type="similarity">
    <text evidence="1">Belongs to the TmcA family.</text>
</comment>
<evidence type="ECO:0000255" key="1">
    <source>
        <dbReference type="HAMAP-Rule" id="MF_01886"/>
    </source>
</evidence>
<evidence type="ECO:0000269" key="2">
    <source>
    </source>
</evidence>
<evidence type="ECO:0000269" key="3">
    <source>
    </source>
</evidence>
<evidence type="ECO:0000303" key="4">
    <source>
    </source>
</evidence>
<evidence type="ECO:0000303" key="5">
    <source>
    </source>
</evidence>
<evidence type="ECO:0000305" key="6">
    <source>
    </source>
</evidence>
<evidence type="ECO:0000305" key="7">
    <source>
    </source>
</evidence>
<evidence type="ECO:0000312" key="8">
    <source>
        <dbReference type="EMBL" id="BAD84943.1"/>
    </source>
</evidence>